<organismHost>
    <name type="scientific">Homo sapiens</name>
    <name type="common">Human</name>
    <dbReference type="NCBI Taxonomy" id="9606"/>
</organismHost>
<keyword id="KW-0067">ATP-binding</keyword>
<keyword id="KW-1048">Host nucleus</keyword>
<keyword id="KW-0945">Host-virus interaction</keyword>
<keyword id="KW-0418">Kinase</keyword>
<keyword id="KW-0547">Nucleotide-binding</keyword>
<keyword id="KW-1185">Reference proteome</keyword>
<keyword id="KW-0723">Serine/threonine-protein kinase</keyword>
<keyword id="KW-0808">Transferase</keyword>
<keyword id="KW-0946">Virion</keyword>
<keyword id="KW-0920">Virion tegument</keyword>
<evidence type="ECO:0000250" key="1"/>
<evidence type="ECO:0000255" key="2">
    <source>
        <dbReference type="PROSITE-ProRule" id="PRU00159"/>
    </source>
</evidence>
<evidence type="ECO:0000255" key="3">
    <source>
        <dbReference type="PROSITE-ProRule" id="PRU10027"/>
    </source>
</evidence>
<evidence type="ECO:0000256" key="4">
    <source>
        <dbReference type="SAM" id="MobiDB-lite"/>
    </source>
</evidence>
<evidence type="ECO:0000269" key="5">
    <source>
    </source>
</evidence>
<gene>
    <name type="ORF">UL13</name>
</gene>
<sequence length="518" mass="57000">MDESGRQRPASHVAADISPQGAHRRSFKAWLASYIHSLSRRASGRPSGPSPRDGAVSGARPGSRRRSSFRERLRAGLSRWRVSRSSRRRSSPEAPGPAAKLRRPPLRRSETAMTSPPSPPSHILSLARIHKLCIPVFAVNPALRYTTLEIPGARSFGGSGGYGEVQLIREHKLAVKTIREKEWFAVELVATLLVGECALRGGRTHDIRGFITPLGFSLQQRQIVFPAYDMDLGKYIGQLASLRATTPSVATALHHCFTDLARAVVFLNTRCGISHLDIKCANVLVMLRSDAVSLRPAVLADFSLVTLNSNSTISRGQFCLQEPDLESPRGFGMPAALTTANFHTLVGHGYNQPPELSVKYLNNERAEFNNRPLKHDVGLAVDLYALGQTLLELLVSVYVAPSLGVPVTRVPGYQYFNNQLSPDFAVALLAYRCVLHPALFVNSAETNTHGLAYDVPEGIRRHLRNPKIRRAFTEQCINYQRTHKAVLSSVSLPPELRPLLVLVSRLCHANPAARHSLS</sequence>
<feature type="chain" id="PRO_0000385455" description="Serine/threonine-protein kinase UL13">
    <location>
        <begin position="1"/>
        <end position="518"/>
    </location>
</feature>
<feature type="domain" description="Protein kinase" evidence="2">
    <location>
        <begin position="151"/>
        <end position="518"/>
    </location>
</feature>
<feature type="region of interest" description="Disordered" evidence="4">
    <location>
        <begin position="1"/>
        <end position="22"/>
    </location>
</feature>
<feature type="region of interest" description="Disordered" evidence="4">
    <location>
        <begin position="39"/>
        <end position="120"/>
    </location>
</feature>
<feature type="compositionally biased region" description="Low complexity" evidence="4">
    <location>
        <begin position="44"/>
        <end position="61"/>
    </location>
</feature>
<feature type="active site" description="Proton acceptor" evidence="2 3">
    <location>
        <position position="277"/>
    </location>
</feature>
<feature type="binding site" evidence="2">
    <location>
        <begin position="157"/>
        <end position="165"/>
    </location>
    <ligand>
        <name>ATP</name>
        <dbReference type="ChEBI" id="CHEBI:30616"/>
    </ligand>
</feature>
<feature type="binding site" evidence="2">
    <location>
        <position position="176"/>
    </location>
    <ligand>
        <name>ATP</name>
        <dbReference type="ChEBI" id="CHEBI:30616"/>
    </ligand>
</feature>
<proteinExistence type="evidence at protein level"/>
<reference key="1">
    <citation type="journal article" date="1998" name="J. Virol.">
        <title>The genome sequence of herpes simplex virus type 2.</title>
        <authorList>
            <person name="Dolan A."/>
            <person name="Jamieson F.E."/>
            <person name="Cunningham C."/>
            <person name="Barnett B.C."/>
            <person name="McGeoch D.J."/>
        </authorList>
    </citation>
    <scope>NUCLEOTIDE SEQUENCE [LARGE SCALE GENOMIC DNA]</scope>
</reference>
<reference key="2">
    <citation type="journal article" date="2008" name="Virology">
        <title>Substrate specificity of the herpes simplex virus type 2 UL13 protein kinase.</title>
        <authorList>
            <person name="Cano-Monreal G.L."/>
            <person name="Tavis J.E."/>
            <person name="Morrison L.A."/>
        </authorList>
    </citation>
    <scope>AUTOPHOSPHORYLATION</scope>
</reference>
<reference key="3">
    <citation type="journal article" date="2009" name="Virology">
        <title>Herpes simplex virus 2 UL13 protein kinase disrupts nuclear lamins.</title>
        <authorList>
            <person name="Cano-Monreal G.L."/>
            <person name="Wylie K.M."/>
            <person name="Cao F."/>
            <person name="Tavis J.E."/>
            <person name="Morrison L.A."/>
        </authorList>
    </citation>
    <scope>FUNCTION</scope>
    <scope>SUBCELLULAR LOCATION</scope>
</reference>
<dbReference type="EC" id="2.7.11.1"/>
<dbReference type="EMBL" id="Z86099">
    <property type="protein sequence ID" value="CAB06773.1"/>
    <property type="molecule type" value="Genomic_DNA"/>
</dbReference>
<dbReference type="Proteomes" id="UP000001874">
    <property type="component" value="Segment"/>
</dbReference>
<dbReference type="GO" id="GO:0042025">
    <property type="term" value="C:host cell nucleus"/>
    <property type="evidence" value="ECO:0007669"/>
    <property type="project" value="UniProtKB-SubCell"/>
</dbReference>
<dbReference type="GO" id="GO:0019033">
    <property type="term" value="C:viral tegument"/>
    <property type="evidence" value="ECO:0007669"/>
    <property type="project" value="UniProtKB-SubCell"/>
</dbReference>
<dbReference type="GO" id="GO:0005524">
    <property type="term" value="F:ATP binding"/>
    <property type="evidence" value="ECO:0007669"/>
    <property type="project" value="UniProtKB-KW"/>
</dbReference>
<dbReference type="GO" id="GO:0106310">
    <property type="term" value="F:protein serine kinase activity"/>
    <property type="evidence" value="ECO:0007669"/>
    <property type="project" value="RHEA"/>
</dbReference>
<dbReference type="GO" id="GO:0004674">
    <property type="term" value="F:protein serine/threonine kinase activity"/>
    <property type="evidence" value="ECO:0007669"/>
    <property type="project" value="UniProtKB-KW"/>
</dbReference>
<dbReference type="Gene3D" id="1.10.510.10">
    <property type="entry name" value="Transferase(Phosphotransferase) domain 1"/>
    <property type="match status" value="1"/>
</dbReference>
<dbReference type="InterPro" id="IPR011009">
    <property type="entry name" value="Kinase-like_dom_sf"/>
</dbReference>
<dbReference type="InterPro" id="IPR000719">
    <property type="entry name" value="Prot_kinase_dom"/>
</dbReference>
<dbReference type="InterPro" id="IPR008271">
    <property type="entry name" value="Ser/Thr_kinase_AS"/>
</dbReference>
<dbReference type="SMART" id="SM00220">
    <property type="entry name" value="S_TKc"/>
    <property type="match status" value="1"/>
</dbReference>
<dbReference type="SUPFAM" id="SSF56112">
    <property type="entry name" value="Protein kinase-like (PK-like)"/>
    <property type="match status" value="1"/>
</dbReference>
<dbReference type="PROSITE" id="PS50011">
    <property type="entry name" value="PROTEIN_KINASE_DOM"/>
    <property type="match status" value="1"/>
</dbReference>
<dbReference type="PROSITE" id="PS00108">
    <property type="entry name" value="PROTEIN_KINASE_ST"/>
    <property type="match status" value="1"/>
</dbReference>
<name>UL13_HHV2H</name>
<comment type="function">
    <text evidence="1 5">Multifunctional serine/threonine kinase that plays a role in several processes including egress of virus particles from the nucleus, modulation of the actin cytoskeleton and regulation of viral and cellular gene expression. Regulates the nuclear localization of viral envelopment factors UL34 and UL31, by phosphorylating the US3 kinase, indicating a role in nuclear egress. Disrupts host nuclear lamins, including LMNA and LMNB1. Phosphorylates the viral Fc receptor composed of glycoproteins E (gE) and I (gI). Phosphorylation of glycoprotein E (gE) by UL13 alters its subcellular localization, from the host early endosome to the plasma membrane. Participates in the transcriptional regulation of cellular and viral mRNAs mainly by phosphorylating the viral transcriptional regulator ICP22. Additional substrates have been identified, including UL41, UL49 or host EF1D (By similarity).</text>
</comment>
<comment type="catalytic activity">
    <reaction>
        <text>L-seryl-[protein] + ATP = O-phospho-L-seryl-[protein] + ADP + H(+)</text>
        <dbReference type="Rhea" id="RHEA:17989"/>
        <dbReference type="Rhea" id="RHEA-COMP:9863"/>
        <dbReference type="Rhea" id="RHEA-COMP:11604"/>
        <dbReference type="ChEBI" id="CHEBI:15378"/>
        <dbReference type="ChEBI" id="CHEBI:29999"/>
        <dbReference type="ChEBI" id="CHEBI:30616"/>
        <dbReference type="ChEBI" id="CHEBI:83421"/>
        <dbReference type="ChEBI" id="CHEBI:456216"/>
        <dbReference type="EC" id="2.7.11.1"/>
    </reaction>
</comment>
<comment type="catalytic activity">
    <reaction>
        <text>L-threonyl-[protein] + ATP = O-phospho-L-threonyl-[protein] + ADP + H(+)</text>
        <dbReference type="Rhea" id="RHEA:46608"/>
        <dbReference type="Rhea" id="RHEA-COMP:11060"/>
        <dbReference type="Rhea" id="RHEA-COMP:11605"/>
        <dbReference type="ChEBI" id="CHEBI:15378"/>
        <dbReference type="ChEBI" id="CHEBI:30013"/>
        <dbReference type="ChEBI" id="CHEBI:30616"/>
        <dbReference type="ChEBI" id="CHEBI:61977"/>
        <dbReference type="ChEBI" id="CHEBI:456216"/>
        <dbReference type="EC" id="2.7.11.1"/>
    </reaction>
</comment>
<comment type="subcellular location">
    <subcellularLocation>
        <location evidence="1">Virion tegument</location>
    </subcellularLocation>
    <subcellularLocation>
        <location evidence="5">Host nucleus</location>
    </subcellularLocation>
</comment>
<comment type="PTM">
    <text>Autophosphorylated.</text>
</comment>
<comment type="miscellaneous">
    <text>Displays a substrate specificity similar to host CDC2.</text>
</comment>
<comment type="similarity">
    <text evidence="2">Belongs to the protein kinase superfamily. Ser/Thr protein kinase family.</text>
</comment>
<protein>
    <recommendedName>
        <fullName>Serine/threonine-protein kinase UL13</fullName>
        <ecNumber>2.7.11.1</ecNumber>
    </recommendedName>
</protein>
<organism>
    <name type="scientific">Human herpesvirus 2 (strain HG52)</name>
    <name type="common">HHV-2</name>
    <name type="synonym">Human herpes simplex virus 2</name>
    <dbReference type="NCBI Taxonomy" id="10315"/>
    <lineage>
        <taxon>Viruses</taxon>
        <taxon>Duplodnaviria</taxon>
        <taxon>Heunggongvirae</taxon>
        <taxon>Peploviricota</taxon>
        <taxon>Herviviricetes</taxon>
        <taxon>Herpesvirales</taxon>
        <taxon>Orthoherpesviridae</taxon>
        <taxon>Alphaherpesvirinae</taxon>
        <taxon>Simplexvirus</taxon>
        <taxon>Simplexvirus humanalpha2</taxon>
        <taxon>Human herpesvirus 2</taxon>
    </lineage>
</organism>
<accession>P89436</accession>